<sequence length="73" mass="8317">MPNSIFKKQLSPIKPGDPIDYKDVELLKKFITERGKILPRRMTGLTSKQQRDLTLAVKRARIVALLPFVNPEG</sequence>
<evidence type="ECO:0000255" key="1">
    <source>
        <dbReference type="HAMAP-Rule" id="MF_00270"/>
    </source>
</evidence>
<evidence type="ECO:0000305" key="2"/>
<accession>Q31AV3</accession>
<reference key="1">
    <citation type="journal article" date="2006" name="Science">
        <title>Genomic islands and the ecology and evolution of Prochlorococcus.</title>
        <authorList>
            <person name="Coleman M.L."/>
            <person name="Sullivan M.B."/>
            <person name="Martiny A.C."/>
            <person name="Steglich C."/>
            <person name="Barry K."/>
            <person name="Delong E.F."/>
            <person name="Chisholm S.W."/>
        </authorList>
    </citation>
    <scope>NUCLEOTIDE SEQUENCE [LARGE SCALE GENOMIC DNA]</scope>
    <source>
        <strain>MIT 9312</strain>
    </source>
</reference>
<comment type="function">
    <text evidence="1">Binds as a heterodimer with protein bS6 to the central domain of the 16S rRNA, where it helps stabilize the platform of the 30S subunit.</text>
</comment>
<comment type="subunit">
    <text evidence="1">Part of the 30S ribosomal subunit. Forms a tight heterodimer with protein bS6.</text>
</comment>
<comment type="similarity">
    <text evidence="1">Belongs to the bacterial ribosomal protein bS18 family.</text>
</comment>
<proteinExistence type="inferred from homology"/>
<organism>
    <name type="scientific">Prochlorococcus marinus (strain MIT 9312)</name>
    <dbReference type="NCBI Taxonomy" id="74546"/>
    <lineage>
        <taxon>Bacteria</taxon>
        <taxon>Bacillati</taxon>
        <taxon>Cyanobacteriota</taxon>
        <taxon>Cyanophyceae</taxon>
        <taxon>Synechococcales</taxon>
        <taxon>Prochlorococcaceae</taxon>
        <taxon>Prochlorococcus</taxon>
    </lineage>
</organism>
<gene>
    <name evidence="1" type="primary">rpsR</name>
    <name evidence="1" type="synonym">rps18</name>
    <name type="ordered locus">PMT9312_0932</name>
</gene>
<dbReference type="EMBL" id="CP000111">
    <property type="protein sequence ID" value="ABB49992.1"/>
    <property type="molecule type" value="Genomic_DNA"/>
</dbReference>
<dbReference type="RefSeq" id="WP_002806014.1">
    <property type="nucleotide sequence ID" value="NC_007577.1"/>
</dbReference>
<dbReference type="SMR" id="Q31AV3"/>
<dbReference type="STRING" id="74546.PMT9312_0932"/>
<dbReference type="GeneID" id="60201040"/>
<dbReference type="KEGG" id="pmi:PMT9312_0932"/>
<dbReference type="eggNOG" id="COG0238">
    <property type="taxonomic scope" value="Bacteria"/>
</dbReference>
<dbReference type="HOGENOM" id="CLU_148710_2_3_3"/>
<dbReference type="OrthoDB" id="9812008at2"/>
<dbReference type="Proteomes" id="UP000002715">
    <property type="component" value="Chromosome"/>
</dbReference>
<dbReference type="GO" id="GO:0022627">
    <property type="term" value="C:cytosolic small ribosomal subunit"/>
    <property type="evidence" value="ECO:0007669"/>
    <property type="project" value="TreeGrafter"/>
</dbReference>
<dbReference type="GO" id="GO:0070181">
    <property type="term" value="F:small ribosomal subunit rRNA binding"/>
    <property type="evidence" value="ECO:0007669"/>
    <property type="project" value="TreeGrafter"/>
</dbReference>
<dbReference type="GO" id="GO:0003735">
    <property type="term" value="F:structural constituent of ribosome"/>
    <property type="evidence" value="ECO:0007669"/>
    <property type="project" value="InterPro"/>
</dbReference>
<dbReference type="GO" id="GO:0006412">
    <property type="term" value="P:translation"/>
    <property type="evidence" value="ECO:0007669"/>
    <property type="project" value="UniProtKB-UniRule"/>
</dbReference>
<dbReference type="FunFam" id="4.10.640.10:FF:000002">
    <property type="entry name" value="30S ribosomal protein S18, chloroplastic"/>
    <property type="match status" value="1"/>
</dbReference>
<dbReference type="Gene3D" id="4.10.640.10">
    <property type="entry name" value="Ribosomal protein S18"/>
    <property type="match status" value="1"/>
</dbReference>
<dbReference type="HAMAP" id="MF_00270">
    <property type="entry name" value="Ribosomal_bS18"/>
    <property type="match status" value="1"/>
</dbReference>
<dbReference type="InterPro" id="IPR001648">
    <property type="entry name" value="Ribosomal_bS18"/>
</dbReference>
<dbReference type="InterPro" id="IPR018275">
    <property type="entry name" value="Ribosomal_bS18_CS"/>
</dbReference>
<dbReference type="InterPro" id="IPR036870">
    <property type="entry name" value="Ribosomal_bS18_sf"/>
</dbReference>
<dbReference type="NCBIfam" id="TIGR00165">
    <property type="entry name" value="S18"/>
    <property type="match status" value="1"/>
</dbReference>
<dbReference type="PANTHER" id="PTHR13479">
    <property type="entry name" value="30S RIBOSOMAL PROTEIN S18"/>
    <property type="match status" value="1"/>
</dbReference>
<dbReference type="PANTHER" id="PTHR13479:SF40">
    <property type="entry name" value="SMALL RIBOSOMAL SUBUNIT PROTEIN BS18M"/>
    <property type="match status" value="1"/>
</dbReference>
<dbReference type="Pfam" id="PF01084">
    <property type="entry name" value="Ribosomal_S18"/>
    <property type="match status" value="1"/>
</dbReference>
<dbReference type="PRINTS" id="PR00974">
    <property type="entry name" value="RIBOSOMALS18"/>
</dbReference>
<dbReference type="SUPFAM" id="SSF46911">
    <property type="entry name" value="Ribosomal protein S18"/>
    <property type="match status" value="1"/>
</dbReference>
<dbReference type="PROSITE" id="PS00057">
    <property type="entry name" value="RIBOSOMAL_S18"/>
    <property type="match status" value="1"/>
</dbReference>
<protein>
    <recommendedName>
        <fullName evidence="1">Small ribosomal subunit protein bS18</fullName>
    </recommendedName>
    <alternativeName>
        <fullName evidence="2">30S ribosomal protein S18</fullName>
    </alternativeName>
</protein>
<feature type="chain" id="PRO_1000003561" description="Small ribosomal subunit protein bS18">
    <location>
        <begin position="1"/>
        <end position="73"/>
    </location>
</feature>
<keyword id="KW-0687">Ribonucleoprotein</keyword>
<keyword id="KW-0689">Ribosomal protein</keyword>
<keyword id="KW-0694">RNA-binding</keyword>
<keyword id="KW-0699">rRNA-binding</keyword>
<name>RS18_PROM9</name>